<reference key="1">
    <citation type="submission" date="2005-02" db="EMBL/GenBank/DDBJ databases">
        <authorList>
            <consortium name="NIH - Zebrafish Gene Collection (ZGC) project"/>
        </authorList>
    </citation>
    <scope>NUCLEOTIDE SEQUENCE [LARGE SCALE MRNA]</scope>
    <source>
        <tissue>Embryo</tissue>
    </source>
</reference>
<sequence>MKWTVLLLEYFLVKVLVLLYSADGEAQQLEGFIMLSGSNGSRDEESVSEPPHTEDKCRGYYDVMGQWDPPFVCQTGNYLYCCGTCGFRFCCAYKNSRLDQSTCKNYDTPVWLTGQTPYKKTLDPRHDPTKDKTNLIVYIICGVVAIMALVGIFTKLGLEKAHRPHRESMSRAVASVMQGARQGQHEEAIGMHTQHYDTVQARANNMQAGQINNMMQTHPYPALSQLSHVYEQQQSAKDLNKYASLKAVAAKANGDFLNKQHRHLVELAAKGNLPLHPIRMEHVEPTATYVTEVPCIKQNGQKPKSIKANVSHPAMAYSSNTIANPGMLRSWEAAETAGRRKTYNPRKMCMVEQVNELHTARSHHYLPTQPYFVTNSKAEVTV</sequence>
<gene>
    <name type="primary">shisa9a</name>
    <name type="ORF">zgc:113574</name>
</gene>
<keyword id="KW-1003">Cell membrane</keyword>
<keyword id="KW-0966">Cell projection</keyword>
<keyword id="KW-0325">Glycoprotein</keyword>
<keyword id="KW-0472">Membrane</keyword>
<keyword id="KW-0628">Postsynaptic cell membrane</keyword>
<keyword id="KW-1185">Reference proteome</keyword>
<keyword id="KW-0732">Signal</keyword>
<keyword id="KW-0770">Synapse</keyword>
<keyword id="KW-0812">Transmembrane</keyword>
<keyword id="KW-1133">Transmembrane helix</keyword>
<dbReference type="EMBL" id="BC090494">
    <property type="protein sequence ID" value="AAH90494.1"/>
    <property type="molecule type" value="mRNA"/>
</dbReference>
<dbReference type="RefSeq" id="NP_001013527.1">
    <property type="nucleotide sequence ID" value="NM_001013509.1"/>
</dbReference>
<dbReference type="SMR" id="Q5BLC7"/>
<dbReference type="FunCoup" id="Q5BLC7">
    <property type="interactions" value="398"/>
</dbReference>
<dbReference type="STRING" id="7955.ENSDARP00000066385"/>
<dbReference type="GlyCosmos" id="Q5BLC7">
    <property type="glycosylation" value="1 site, No reported glycans"/>
</dbReference>
<dbReference type="PaxDb" id="7955-ENSDARP00000066385"/>
<dbReference type="GeneID" id="541382"/>
<dbReference type="KEGG" id="dre:541382"/>
<dbReference type="AGR" id="ZFIN:ZDB-GENE-050320-78"/>
<dbReference type="CTD" id="541382"/>
<dbReference type="ZFIN" id="ZDB-GENE-050320-78">
    <property type="gene designation" value="shisa9a"/>
</dbReference>
<dbReference type="eggNOG" id="ENOG502QT2A">
    <property type="taxonomic scope" value="Eukaryota"/>
</dbReference>
<dbReference type="InParanoid" id="Q5BLC7"/>
<dbReference type="OrthoDB" id="9935471at2759"/>
<dbReference type="PhylomeDB" id="Q5BLC7"/>
<dbReference type="PRO" id="PR:Q5BLC7"/>
<dbReference type="Proteomes" id="UP000000437">
    <property type="component" value="Alternate scaffold 12"/>
</dbReference>
<dbReference type="Proteomes" id="UP000000437">
    <property type="component" value="Chromosome 12"/>
</dbReference>
<dbReference type="GO" id="GO:0032281">
    <property type="term" value="C:AMPA glutamate receptor complex"/>
    <property type="evidence" value="ECO:0000318"/>
    <property type="project" value="GO_Central"/>
</dbReference>
<dbReference type="GO" id="GO:0032591">
    <property type="term" value="C:dendritic spine membrane"/>
    <property type="evidence" value="ECO:0000250"/>
    <property type="project" value="UniProtKB"/>
</dbReference>
<dbReference type="GO" id="GO:0008328">
    <property type="term" value="C:ionotropic glutamate receptor complex"/>
    <property type="evidence" value="ECO:0000250"/>
    <property type="project" value="UniProtKB"/>
</dbReference>
<dbReference type="GO" id="GO:0014069">
    <property type="term" value="C:postsynaptic density"/>
    <property type="evidence" value="ECO:0000318"/>
    <property type="project" value="GO_Central"/>
</dbReference>
<dbReference type="GO" id="GO:0045211">
    <property type="term" value="C:postsynaptic membrane"/>
    <property type="evidence" value="ECO:0000318"/>
    <property type="project" value="GO_Central"/>
</dbReference>
<dbReference type="GO" id="GO:0045202">
    <property type="term" value="C:synapse"/>
    <property type="evidence" value="ECO:0000250"/>
    <property type="project" value="UniProtKB"/>
</dbReference>
<dbReference type="GO" id="GO:0048172">
    <property type="term" value="P:regulation of short-term neuronal synaptic plasticity"/>
    <property type="evidence" value="ECO:0000250"/>
    <property type="project" value="UniProtKB"/>
</dbReference>
<dbReference type="InterPro" id="IPR026910">
    <property type="entry name" value="Shisa"/>
</dbReference>
<dbReference type="InterPro" id="IPR053891">
    <property type="entry name" value="Shisa_N"/>
</dbReference>
<dbReference type="PANTHER" id="PTHR31774:SF1">
    <property type="entry name" value="PROTEIN SHISA-9"/>
    <property type="match status" value="1"/>
</dbReference>
<dbReference type="PANTHER" id="PTHR31774">
    <property type="entry name" value="PROTEIN SHISA-9-RELATED"/>
    <property type="match status" value="1"/>
</dbReference>
<dbReference type="Pfam" id="PF13908">
    <property type="entry name" value="Shisa_N"/>
    <property type="match status" value="1"/>
</dbReference>
<feature type="signal peptide" evidence="2">
    <location>
        <begin position="1"/>
        <end position="26"/>
    </location>
</feature>
<feature type="chain" id="PRO_0000394255" description="Protein shisa-9A">
    <location>
        <begin position="27"/>
        <end position="382"/>
    </location>
</feature>
<feature type="topological domain" description="Extracellular" evidence="2">
    <location>
        <begin position="27"/>
        <end position="132"/>
    </location>
</feature>
<feature type="transmembrane region" description="Helical" evidence="2">
    <location>
        <begin position="133"/>
        <end position="153"/>
    </location>
</feature>
<feature type="topological domain" description="Cytoplasmic" evidence="2">
    <location>
        <begin position="154"/>
        <end position="382"/>
    </location>
</feature>
<feature type="glycosylation site" description="N-linked (GlcNAc...) asparagine" evidence="2">
    <location>
        <position position="39"/>
    </location>
</feature>
<name>SHA9A_DANRE</name>
<comment type="function">
    <text evidence="1">Regulator of short-term neuronal synaptic plasticity in the dentate gyrus. Associates with AMPA receptors (ionotropic glutamate receptors) in synaptic spines and promotes AMPA receptor desensitization at excitatory synapses (By similarity).</text>
</comment>
<comment type="subunit">
    <text evidence="1">Component of some AMPA receptors (ionotropic glutamate receptors) complex.</text>
</comment>
<comment type="subcellular location">
    <subcellularLocation>
        <location evidence="1">Cell projection</location>
        <location evidence="1">Dendritic spine membrane</location>
        <topology evidence="1">Single-pass type I membrane protein</topology>
    </subcellularLocation>
    <subcellularLocation>
        <location evidence="1">Synapse</location>
    </subcellularLocation>
</comment>
<comment type="similarity">
    <text evidence="3">Belongs to the shisa family. SHISA9 subfamily.</text>
</comment>
<protein>
    <recommendedName>
        <fullName>Protein shisa-9A</fullName>
    </recommendedName>
</protein>
<evidence type="ECO:0000250" key="1"/>
<evidence type="ECO:0000255" key="2"/>
<evidence type="ECO:0000305" key="3"/>
<organism>
    <name type="scientific">Danio rerio</name>
    <name type="common">Zebrafish</name>
    <name type="synonym">Brachydanio rerio</name>
    <dbReference type="NCBI Taxonomy" id="7955"/>
    <lineage>
        <taxon>Eukaryota</taxon>
        <taxon>Metazoa</taxon>
        <taxon>Chordata</taxon>
        <taxon>Craniata</taxon>
        <taxon>Vertebrata</taxon>
        <taxon>Euteleostomi</taxon>
        <taxon>Actinopterygii</taxon>
        <taxon>Neopterygii</taxon>
        <taxon>Teleostei</taxon>
        <taxon>Ostariophysi</taxon>
        <taxon>Cypriniformes</taxon>
        <taxon>Danionidae</taxon>
        <taxon>Danioninae</taxon>
        <taxon>Danio</taxon>
    </lineage>
</organism>
<accession>Q5BLC7</accession>
<proteinExistence type="evidence at transcript level"/>